<keyword id="KW-1185">Reference proteome</keyword>
<keyword id="KW-0732">Signal</keyword>
<evidence type="ECO:0000255" key="1"/>
<name>308L_IIV6</name>
<gene>
    <name type="ORF">IIV6-308L</name>
</gene>
<accession>Q91FL6</accession>
<sequence length="73" mass="7958">MLHLIKMVSKIVLLITLVFIVSAVTGSDTWVGECDYACENGKNAIDACCSQKGYAPRGYCPNGMHARCQYSVI</sequence>
<protein>
    <recommendedName>
        <fullName>Uncharacterized protein 308L</fullName>
    </recommendedName>
</protein>
<organismHost>
    <name type="scientific">Acheta domesticus</name>
    <name type="common">House cricket</name>
    <dbReference type="NCBI Taxonomy" id="6997"/>
</organismHost>
<organismHost>
    <name type="scientific">Chilo suppressalis</name>
    <name type="common">Asiatic rice borer moth</name>
    <dbReference type="NCBI Taxonomy" id="168631"/>
</organismHost>
<organismHost>
    <name type="scientific">Gryllus bimaculatus</name>
    <name type="common">Two-spotted cricket</name>
    <dbReference type="NCBI Taxonomy" id="6999"/>
</organismHost>
<organismHost>
    <name type="scientific">Gryllus campestris</name>
    <dbReference type="NCBI Taxonomy" id="58607"/>
</organismHost>
<organismHost>
    <name type="scientific">Spodoptera frugiperda</name>
    <name type="common">Fall armyworm</name>
    <dbReference type="NCBI Taxonomy" id="7108"/>
</organismHost>
<dbReference type="EMBL" id="AF303741">
    <property type="protein sequence ID" value="AAK82169.1"/>
    <property type="molecule type" value="Genomic_DNA"/>
</dbReference>
<dbReference type="RefSeq" id="NP_149771.1">
    <property type="nucleotide sequence ID" value="NC_003038.1"/>
</dbReference>
<dbReference type="KEGG" id="vg:1733119"/>
<dbReference type="Proteomes" id="UP000001359">
    <property type="component" value="Genome"/>
</dbReference>
<feature type="signal peptide" evidence="1">
    <location>
        <begin position="1"/>
        <end position="23"/>
    </location>
</feature>
<feature type="chain" id="PRO_0000377852" description="Uncharacterized protein 308L">
    <location>
        <begin position="24"/>
        <end position="73"/>
    </location>
</feature>
<reference key="1">
    <citation type="journal article" date="2001" name="Virology">
        <title>Analysis of the first complete DNA sequence of an invertebrate iridovirus: coding strategy of the genome of Chilo iridescent virus.</title>
        <authorList>
            <person name="Jakob N.J."/>
            <person name="Mueller K."/>
            <person name="Bahr U."/>
            <person name="Darai G."/>
        </authorList>
    </citation>
    <scope>NUCLEOTIDE SEQUENCE [LARGE SCALE GENOMIC DNA]</scope>
</reference>
<reference key="2">
    <citation type="journal article" date="2007" name="Virol. J.">
        <title>Comparative genomic analysis of the family Iridoviridae: re-annotating and defining the core set of iridovirus genes.</title>
        <authorList>
            <person name="Eaton H.E."/>
            <person name="Metcalf J."/>
            <person name="Penny E."/>
            <person name="Tcherepanov V."/>
            <person name="Upton C."/>
            <person name="Brunetti C.R."/>
        </authorList>
    </citation>
    <scope>GENOME REANNOTATION</scope>
</reference>
<organism>
    <name type="scientific">Invertebrate iridescent virus 6</name>
    <name type="common">IIV-6</name>
    <name type="synonym">Chilo iridescent virus</name>
    <dbReference type="NCBI Taxonomy" id="176652"/>
    <lineage>
        <taxon>Viruses</taxon>
        <taxon>Varidnaviria</taxon>
        <taxon>Bamfordvirae</taxon>
        <taxon>Nucleocytoviricota</taxon>
        <taxon>Megaviricetes</taxon>
        <taxon>Pimascovirales</taxon>
        <taxon>Iridoviridae</taxon>
        <taxon>Betairidovirinae</taxon>
        <taxon>Iridovirus</taxon>
    </lineage>
</organism>
<proteinExistence type="inferred from homology"/>